<organism>
    <name type="scientific">Staphylococcus aureus (strain MRSA252)</name>
    <dbReference type="NCBI Taxonomy" id="282458"/>
    <lineage>
        <taxon>Bacteria</taxon>
        <taxon>Bacillati</taxon>
        <taxon>Bacillota</taxon>
        <taxon>Bacilli</taxon>
        <taxon>Bacillales</taxon>
        <taxon>Staphylococcaceae</taxon>
        <taxon>Staphylococcus</taxon>
    </lineage>
</organism>
<accession>Q6GFV0</accession>
<proteinExistence type="inferred from homology"/>
<reference key="1">
    <citation type="journal article" date="2004" name="Proc. Natl. Acad. Sci. U.S.A.">
        <title>Complete genomes of two clinical Staphylococcus aureus strains: evidence for the rapid evolution of virulence and drug resistance.</title>
        <authorList>
            <person name="Holden M.T.G."/>
            <person name="Feil E.J."/>
            <person name="Lindsay J.A."/>
            <person name="Peacock S.J."/>
            <person name="Day N.P.J."/>
            <person name="Enright M.C."/>
            <person name="Foster T.J."/>
            <person name="Moore C.E."/>
            <person name="Hurst L."/>
            <person name="Atkin R."/>
            <person name="Barron A."/>
            <person name="Bason N."/>
            <person name="Bentley S.D."/>
            <person name="Chillingworth C."/>
            <person name="Chillingworth T."/>
            <person name="Churcher C."/>
            <person name="Clark L."/>
            <person name="Corton C."/>
            <person name="Cronin A."/>
            <person name="Doggett J."/>
            <person name="Dowd L."/>
            <person name="Feltwell T."/>
            <person name="Hance Z."/>
            <person name="Harris B."/>
            <person name="Hauser H."/>
            <person name="Holroyd S."/>
            <person name="Jagels K."/>
            <person name="James K.D."/>
            <person name="Lennard N."/>
            <person name="Line A."/>
            <person name="Mayes R."/>
            <person name="Moule S."/>
            <person name="Mungall K."/>
            <person name="Ormond D."/>
            <person name="Quail M.A."/>
            <person name="Rabbinowitsch E."/>
            <person name="Rutherford K.M."/>
            <person name="Sanders M."/>
            <person name="Sharp S."/>
            <person name="Simmonds M."/>
            <person name="Stevens K."/>
            <person name="Whitehead S."/>
            <person name="Barrell B.G."/>
            <person name="Spratt B.G."/>
            <person name="Parkhill J."/>
        </authorList>
    </citation>
    <scope>NUCLEOTIDE SEQUENCE [LARGE SCALE GENOMIC DNA]</scope>
    <source>
        <strain>MRSA252</strain>
    </source>
</reference>
<comment type="cofactor">
    <cofactor evidence="1">
        <name>Zn(2+)</name>
        <dbReference type="ChEBI" id="CHEBI:29105"/>
    </cofactor>
    <text evidence="1">Binds 2 Zn(2+) ions per subunit.</text>
</comment>
<comment type="similarity">
    <text evidence="2">Belongs to the peptidase M20A family.</text>
</comment>
<keyword id="KW-0224">Dipeptidase</keyword>
<keyword id="KW-0378">Hydrolase</keyword>
<keyword id="KW-0479">Metal-binding</keyword>
<keyword id="KW-0482">Metalloprotease</keyword>
<keyword id="KW-0645">Protease</keyword>
<keyword id="KW-0862">Zinc</keyword>
<protein>
    <recommendedName>
        <fullName>Putative dipeptidase SAR1836</fullName>
        <ecNumber>3.4.13.-</ecNumber>
    </recommendedName>
</protein>
<name>PEPVL_STAAR</name>
<feature type="chain" id="PRO_0000282631" description="Putative dipeptidase SAR1836">
    <location>
        <begin position="1"/>
        <end position="469"/>
    </location>
</feature>
<feature type="active site" evidence="1">
    <location>
        <position position="86"/>
    </location>
</feature>
<feature type="active site" description="Proton acceptor" evidence="1">
    <location>
        <position position="149"/>
    </location>
</feature>
<feature type="binding site" evidence="1">
    <location>
        <position position="84"/>
    </location>
    <ligand>
        <name>Zn(2+)</name>
        <dbReference type="ChEBI" id="CHEBI:29105"/>
        <label>2</label>
    </ligand>
</feature>
<feature type="binding site" evidence="1">
    <location>
        <position position="115"/>
    </location>
    <ligand>
        <name>Zn(2+)</name>
        <dbReference type="ChEBI" id="CHEBI:29105"/>
        <label>1</label>
    </ligand>
</feature>
<feature type="binding site" evidence="1">
    <location>
        <position position="115"/>
    </location>
    <ligand>
        <name>Zn(2+)</name>
        <dbReference type="ChEBI" id="CHEBI:29105"/>
        <label>2</label>
    </ligand>
</feature>
<feature type="binding site" evidence="1">
    <location>
        <position position="150"/>
    </location>
    <ligand>
        <name>Zn(2+)</name>
        <dbReference type="ChEBI" id="CHEBI:29105"/>
        <label>1</label>
    </ligand>
</feature>
<feature type="binding site" evidence="1">
    <location>
        <position position="173"/>
    </location>
    <ligand>
        <name>Zn(2+)</name>
        <dbReference type="ChEBI" id="CHEBI:29105"/>
        <label>2</label>
    </ligand>
</feature>
<feature type="binding site" evidence="1">
    <location>
        <position position="440"/>
    </location>
    <ligand>
        <name>Zn(2+)</name>
        <dbReference type="ChEBI" id="CHEBI:29105"/>
        <label>1</label>
    </ligand>
</feature>
<gene>
    <name type="ordered locus">SAR1836</name>
</gene>
<dbReference type="EC" id="3.4.13.-"/>
<dbReference type="EMBL" id="BX571856">
    <property type="protein sequence ID" value="CAG40827.1"/>
    <property type="molecule type" value="Genomic_DNA"/>
</dbReference>
<dbReference type="SMR" id="Q6GFV0"/>
<dbReference type="KEGG" id="sar:SAR1836"/>
<dbReference type="HOGENOM" id="CLU_031786_2_0_9"/>
<dbReference type="Proteomes" id="UP000000596">
    <property type="component" value="Chromosome"/>
</dbReference>
<dbReference type="GO" id="GO:0008777">
    <property type="term" value="F:acetylornithine deacetylase activity"/>
    <property type="evidence" value="ECO:0007669"/>
    <property type="project" value="TreeGrafter"/>
</dbReference>
<dbReference type="GO" id="GO:0016805">
    <property type="term" value="F:dipeptidase activity"/>
    <property type="evidence" value="ECO:0007669"/>
    <property type="project" value="UniProtKB-KW"/>
</dbReference>
<dbReference type="GO" id="GO:0008237">
    <property type="term" value="F:metallopeptidase activity"/>
    <property type="evidence" value="ECO:0007669"/>
    <property type="project" value="UniProtKB-KW"/>
</dbReference>
<dbReference type="GO" id="GO:0008270">
    <property type="term" value="F:zinc ion binding"/>
    <property type="evidence" value="ECO:0007669"/>
    <property type="project" value="InterPro"/>
</dbReference>
<dbReference type="GO" id="GO:0006526">
    <property type="term" value="P:L-arginine biosynthetic process"/>
    <property type="evidence" value="ECO:0007669"/>
    <property type="project" value="TreeGrafter"/>
</dbReference>
<dbReference type="GO" id="GO:0006508">
    <property type="term" value="P:proteolysis"/>
    <property type="evidence" value="ECO:0007669"/>
    <property type="project" value="UniProtKB-KW"/>
</dbReference>
<dbReference type="CDD" id="cd03888">
    <property type="entry name" value="M20_PepV"/>
    <property type="match status" value="1"/>
</dbReference>
<dbReference type="Gene3D" id="3.30.70.360">
    <property type="match status" value="2"/>
</dbReference>
<dbReference type="Gene3D" id="3.40.630.10">
    <property type="entry name" value="Zn peptidases"/>
    <property type="match status" value="1"/>
</dbReference>
<dbReference type="InterPro" id="IPR036264">
    <property type="entry name" value="Bact_exopeptidase_dim_dom"/>
</dbReference>
<dbReference type="InterPro" id="IPR010964">
    <property type="entry name" value="M20A_pepV-rel"/>
</dbReference>
<dbReference type="InterPro" id="IPR002933">
    <property type="entry name" value="Peptidase_M20"/>
</dbReference>
<dbReference type="InterPro" id="IPR011650">
    <property type="entry name" value="Peptidase_M20_dimer"/>
</dbReference>
<dbReference type="InterPro" id="IPR050072">
    <property type="entry name" value="Peptidase_M20A"/>
</dbReference>
<dbReference type="NCBIfam" id="TIGR01887">
    <property type="entry name" value="dipeptidaselike"/>
    <property type="match status" value="1"/>
</dbReference>
<dbReference type="NCBIfam" id="NF005591">
    <property type="entry name" value="PRK07318.1"/>
    <property type="match status" value="1"/>
</dbReference>
<dbReference type="PANTHER" id="PTHR43808">
    <property type="entry name" value="ACETYLORNITHINE DEACETYLASE"/>
    <property type="match status" value="1"/>
</dbReference>
<dbReference type="PANTHER" id="PTHR43808:SF31">
    <property type="entry name" value="N-ACETYL-L-CITRULLINE DEACETYLASE"/>
    <property type="match status" value="1"/>
</dbReference>
<dbReference type="Pfam" id="PF07687">
    <property type="entry name" value="M20_dimer"/>
    <property type="match status" value="1"/>
</dbReference>
<dbReference type="Pfam" id="PF01546">
    <property type="entry name" value="Peptidase_M20"/>
    <property type="match status" value="1"/>
</dbReference>
<dbReference type="SUPFAM" id="SSF55031">
    <property type="entry name" value="Bacterial exopeptidase dimerisation domain"/>
    <property type="match status" value="1"/>
</dbReference>
<dbReference type="SUPFAM" id="SSF53187">
    <property type="entry name" value="Zn-dependent exopeptidases"/>
    <property type="match status" value="1"/>
</dbReference>
<sequence length="469" mass="52794">MWKEKVQQYEDQIINDLKGLLAIESVRDDAKASEDAPVGPGPRKALDYMYEIAHRDGFTTHDVDHIAGRIEAGKGNDVLGILCHVDVVPAGDGWDSNPFEPVVTEDAIIARGTLDDKGPTIAAYYAIKILEDMNVDWKKRIHMIIGTDEESDWKCTDRYFKTEEMPTLGFAPDAEFPCIHGEKGITTFDLVQNKLAEDQDEPDYELITFKSGERYNMVPDHAEARVLVKENMTDVIQDFEYFLEQNHLQGDSTVDSGILVLTVEGKAVHGMDPSIGVNAGLYLLKFLASLNLDNNAKAFVAFSNRYLFNSDFGEKMGMKFHTDVMGDVTTNIGVITYDNENAGLFGINLRYPEGFEFEKAMDRFANEIQQYGFEVKLGKVQPPHYVDKNDPFVQKLVTAYRNQTNDMTEPYTIGGGTYARNLDKGVAFGAMFSDSEDLMHQKNEYITKKQLFNATSIYLEAIYSLCVEE</sequence>
<evidence type="ECO:0000250" key="1"/>
<evidence type="ECO:0000305" key="2"/>